<proteinExistence type="inferred from homology"/>
<name>Y3029_RHOPA</name>
<reference key="1">
    <citation type="journal article" date="2004" name="Nat. Biotechnol.">
        <title>Complete genome sequence of the metabolically versatile photosynthetic bacterium Rhodopseudomonas palustris.</title>
        <authorList>
            <person name="Larimer F.W."/>
            <person name="Chain P."/>
            <person name="Hauser L."/>
            <person name="Lamerdin J.E."/>
            <person name="Malfatti S."/>
            <person name="Do L."/>
            <person name="Land M.L."/>
            <person name="Pelletier D.A."/>
            <person name="Beatty J.T."/>
            <person name="Lang A.S."/>
            <person name="Tabita F.R."/>
            <person name="Gibson J.L."/>
            <person name="Hanson T.E."/>
            <person name="Bobst C."/>
            <person name="Torres y Torres J.L."/>
            <person name="Peres C."/>
            <person name="Harrison F.H."/>
            <person name="Gibson J."/>
            <person name="Harwood C.S."/>
        </authorList>
    </citation>
    <scope>NUCLEOTIDE SEQUENCE [LARGE SCALE GENOMIC DNA]</scope>
    <source>
        <strain>ATCC BAA-98 / CGA009</strain>
    </source>
</reference>
<comment type="subcellular location">
    <subcellularLocation>
        <location evidence="1">Cell membrane</location>
        <topology evidence="1">Multi-pass membrane protein</topology>
    </subcellularLocation>
</comment>
<comment type="similarity">
    <text evidence="1">Belongs to the UPF0391 family.</text>
</comment>
<comment type="sequence caution" evidence="2">
    <conflict type="erroneous initiation">
        <sequence resource="EMBL-CDS" id="CAE28470"/>
    </conflict>
</comment>
<keyword id="KW-1003">Cell membrane</keyword>
<keyword id="KW-0472">Membrane</keyword>
<keyword id="KW-0812">Transmembrane</keyword>
<keyword id="KW-1133">Transmembrane helix</keyword>
<sequence>MTILKWALIFLVVSIIAGIFGFTGISAASADIARILFYVFVVIFVVLLILGFTIFRA</sequence>
<dbReference type="EMBL" id="BX572602">
    <property type="protein sequence ID" value="CAE28470.1"/>
    <property type="status" value="ALT_INIT"/>
    <property type="molecule type" value="Genomic_DNA"/>
</dbReference>
<dbReference type="RefSeq" id="WP_012496500.1">
    <property type="nucleotide sequence ID" value="NZ_CP116810.1"/>
</dbReference>
<dbReference type="STRING" id="258594.RPA3029"/>
<dbReference type="GeneID" id="66894112"/>
<dbReference type="eggNOG" id="COG5487">
    <property type="taxonomic scope" value="Bacteria"/>
</dbReference>
<dbReference type="HOGENOM" id="CLU_187346_1_1_5"/>
<dbReference type="PhylomeDB" id="Q6N5F0"/>
<dbReference type="GO" id="GO:0005886">
    <property type="term" value="C:plasma membrane"/>
    <property type="evidence" value="ECO:0007669"/>
    <property type="project" value="UniProtKB-SubCell"/>
</dbReference>
<dbReference type="HAMAP" id="MF_01361">
    <property type="entry name" value="UPF0391"/>
    <property type="match status" value="1"/>
</dbReference>
<dbReference type="InterPro" id="IPR009760">
    <property type="entry name" value="DUF1328"/>
</dbReference>
<dbReference type="NCBIfam" id="NF010226">
    <property type="entry name" value="PRK13682.1-1"/>
    <property type="match status" value="1"/>
</dbReference>
<dbReference type="NCBIfam" id="NF010232">
    <property type="entry name" value="PRK13682.2-2"/>
    <property type="match status" value="1"/>
</dbReference>
<dbReference type="NCBIfam" id="NF010234">
    <property type="entry name" value="PRK13682.2-5"/>
    <property type="match status" value="1"/>
</dbReference>
<dbReference type="Pfam" id="PF07043">
    <property type="entry name" value="DUF1328"/>
    <property type="match status" value="1"/>
</dbReference>
<dbReference type="PIRSF" id="PIRSF036466">
    <property type="entry name" value="UCP036466"/>
    <property type="match status" value="1"/>
</dbReference>
<evidence type="ECO:0000255" key="1">
    <source>
        <dbReference type="HAMAP-Rule" id="MF_01361"/>
    </source>
</evidence>
<evidence type="ECO:0000305" key="2"/>
<accession>Q6N5F0</accession>
<feature type="chain" id="PRO_0000256776" description="UPF0391 membrane protein RPA3029">
    <location>
        <begin position="1"/>
        <end position="57"/>
    </location>
</feature>
<feature type="transmembrane region" description="Helical" evidence="1">
    <location>
        <begin position="6"/>
        <end position="26"/>
    </location>
</feature>
<feature type="transmembrane region" description="Helical" evidence="1">
    <location>
        <begin position="35"/>
        <end position="55"/>
    </location>
</feature>
<organism>
    <name type="scientific">Rhodopseudomonas palustris (strain ATCC BAA-98 / CGA009)</name>
    <dbReference type="NCBI Taxonomy" id="258594"/>
    <lineage>
        <taxon>Bacteria</taxon>
        <taxon>Pseudomonadati</taxon>
        <taxon>Pseudomonadota</taxon>
        <taxon>Alphaproteobacteria</taxon>
        <taxon>Hyphomicrobiales</taxon>
        <taxon>Nitrobacteraceae</taxon>
        <taxon>Rhodopseudomonas</taxon>
    </lineage>
</organism>
<gene>
    <name type="ordered locus">RPA3029</name>
</gene>
<protein>
    <recommendedName>
        <fullName evidence="1">UPF0391 membrane protein RPA3029</fullName>
    </recommendedName>
</protein>